<dbReference type="EC" id="1.14.19.-" evidence="4 6"/>
<dbReference type="EC" id="1.14.19.1" evidence="4 6 7"/>
<dbReference type="EMBL" id="AF260243">
    <property type="protein sequence ID" value="AAF97549.1"/>
    <property type="molecule type" value="mRNA"/>
</dbReference>
<dbReference type="EMBL" id="FO081104">
    <property type="protein sequence ID" value="CCD69123.1"/>
    <property type="molecule type" value="Genomic_DNA"/>
</dbReference>
<dbReference type="PIR" id="T28723">
    <property type="entry name" value="T28723"/>
</dbReference>
<dbReference type="RefSeq" id="NP_504814.1">
    <property type="nucleotide sequence ID" value="NM_072413.7"/>
</dbReference>
<dbReference type="SMR" id="G5EGH6"/>
<dbReference type="BioGRID" id="44145">
    <property type="interactions" value="2"/>
</dbReference>
<dbReference type="FunCoup" id="G5EGH6">
    <property type="interactions" value="275"/>
</dbReference>
<dbReference type="STRING" id="6239.F10D2.9.1"/>
<dbReference type="SwissLipids" id="SLP:000000271"/>
<dbReference type="PaxDb" id="6239-F10D2.9"/>
<dbReference type="PeptideAtlas" id="G5EGH6"/>
<dbReference type="EnsemblMetazoa" id="F10D2.9.1">
    <property type="protein sequence ID" value="F10D2.9.1"/>
    <property type="gene ID" value="WBGene00001399"/>
</dbReference>
<dbReference type="GeneID" id="179100"/>
<dbReference type="KEGG" id="cel:CELE_F10D2.9"/>
<dbReference type="AGR" id="WB:WBGene00001399"/>
<dbReference type="CTD" id="179100"/>
<dbReference type="WormBase" id="F10D2.9">
    <property type="protein sequence ID" value="CE09320"/>
    <property type="gene ID" value="WBGene00001399"/>
    <property type="gene designation" value="fat-7"/>
</dbReference>
<dbReference type="eggNOG" id="KOG1600">
    <property type="taxonomic scope" value="Eukaryota"/>
</dbReference>
<dbReference type="GeneTree" id="ENSGT00970000196153"/>
<dbReference type="HOGENOM" id="CLU_027359_0_0_1"/>
<dbReference type="InParanoid" id="G5EGH6"/>
<dbReference type="OMA" id="CQHGPID"/>
<dbReference type="OrthoDB" id="10260134at2759"/>
<dbReference type="PhylomeDB" id="G5EGH6"/>
<dbReference type="Reactome" id="R-CEL-75105">
    <property type="pathway name" value="Fatty acyl-CoA biosynthesis"/>
</dbReference>
<dbReference type="UniPathway" id="UPA00199"/>
<dbReference type="UniPathway" id="UPA01038"/>
<dbReference type="PRO" id="PR:G5EGH6"/>
<dbReference type="Proteomes" id="UP000001940">
    <property type="component" value="Chromosome V"/>
</dbReference>
<dbReference type="Bgee" id="WBGene00001399">
    <property type="expression patterns" value="Expressed in adult organism and 3 other cell types or tissues"/>
</dbReference>
<dbReference type="GO" id="GO:0005789">
    <property type="term" value="C:endoplasmic reticulum membrane"/>
    <property type="evidence" value="ECO:0000318"/>
    <property type="project" value="GO_Central"/>
</dbReference>
<dbReference type="GO" id="GO:0005506">
    <property type="term" value="F:iron ion binding"/>
    <property type="evidence" value="ECO:0000318"/>
    <property type="project" value="GO_Central"/>
</dbReference>
<dbReference type="GO" id="GO:0004768">
    <property type="term" value="F:stearoyl-CoA 9-desaturase activity"/>
    <property type="evidence" value="ECO:0000314"/>
    <property type="project" value="WormBase"/>
</dbReference>
<dbReference type="GO" id="GO:0006633">
    <property type="term" value="P:fatty acid biosynthetic process"/>
    <property type="evidence" value="ECO:0000314"/>
    <property type="project" value="WormBase"/>
</dbReference>
<dbReference type="GO" id="GO:0032364">
    <property type="term" value="P:intracellular oxygen homeostasis"/>
    <property type="evidence" value="ECO:0000315"/>
    <property type="project" value="UniProtKB"/>
</dbReference>
<dbReference type="GO" id="GO:0009791">
    <property type="term" value="P:post-embryonic development"/>
    <property type="evidence" value="ECO:0000316"/>
    <property type="project" value="WormBase"/>
</dbReference>
<dbReference type="GO" id="GO:0001666">
    <property type="term" value="P:response to hypoxia"/>
    <property type="evidence" value="ECO:0000315"/>
    <property type="project" value="UniProtKB"/>
</dbReference>
<dbReference type="GO" id="GO:0006636">
    <property type="term" value="P:unsaturated fatty acid biosynthetic process"/>
    <property type="evidence" value="ECO:0000318"/>
    <property type="project" value="GO_Central"/>
</dbReference>
<dbReference type="CDD" id="cd03505">
    <property type="entry name" value="Delta9-FADS-like"/>
    <property type="match status" value="1"/>
</dbReference>
<dbReference type="InterPro" id="IPR015876">
    <property type="entry name" value="Acyl-CoA_DS"/>
</dbReference>
<dbReference type="PANTHER" id="PTHR11351">
    <property type="entry name" value="ACYL-COA DESATURASE"/>
    <property type="match status" value="1"/>
</dbReference>
<dbReference type="PANTHER" id="PTHR11351:SF31">
    <property type="entry name" value="DESATURASE 1, ISOFORM A-RELATED"/>
    <property type="match status" value="1"/>
</dbReference>
<dbReference type="PRINTS" id="PR00075">
    <property type="entry name" value="FACDDSATRASE"/>
</dbReference>
<comment type="function">
    <text evidence="2 4 5 6 7">Delta(9)-fatty acid desaturase that acts preferentially on stearoyl-CoA (octadecanoyl-CoA) producing the monounsaturated oleoyl-CoA ((9Z)-octadecenoyl-CoA), one of the most abundant monounsaturated fatty acid in Caenorhabditis elegans phospholipids and triacylglycerols (PubMed:10872837, PubMed:16839188, PubMed:29237573). Also acts on palmitoyl-CoA (hexadecanoyl-CoA), heptadecanoyl-CoA and (11E)-octadecenoyl-CoA (trans-vaccenoyl-CoA), the monounsaturated fatty acids (MUFAs) produced are further used by several other desaturases and elongases as substrates to synthesize polyunsaturated fatty acids (PUFAs) endogenously (PUFAs are essential for membrane structure and many cellular and physiological processes) (PubMed:10872837, PubMed:16839188, PubMed:29237573). Unlike plants, Caenorhabditis elegans desaturases seem to use fatty acyl-CoAs as substrates (By similarity). Partially inhibits expression of genes involved in beta-oxidation, such as ech-1 and acs-2, perhaps signaling via the actions of one of its fatty acid products (PubMed:15719061). May form part of a negative feedback loop with the transcription factor nhr-49 to limit beta-oxidation, in which nhr-49 stimulates expression of fat-7 and acs-2, and in turn fat-7 indirectly inhibits acs-2 and other genes also involved in beta-oxidation (PubMed:15719061).</text>
</comment>
<comment type="catalytic activity">
    <reaction evidence="4 6 7">
        <text>octadecanoyl-CoA + 2 Fe(II)-[cytochrome b5] + O2 + 2 H(+) = (9Z)-octadecenoyl-CoA + 2 Fe(III)-[cytochrome b5] + 2 H2O</text>
        <dbReference type="Rhea" id="RHEA:19721"/>
        <dbReference type="Rhea" id="RHEA-COMP:10438"/>
        <dbReference type="Rhea" id="RHEA-COMP:10439"/>
        <dbReference type="ChEBI" id="CHEBI:15377"/>
        <dbReference type="ChEBI" id="CHEBI:15378"/>
        <dbReference type="ChEBI" id="CHEBI:15379"/>
        <dbReference type="ChEBI" id="CHEBI:29033"/>
        <dbReference type="ChEBI" id="CHEBI:29034"/>
        <dbReference type="ChEBI" id="CHEBI:57387"/>
        <dbReference type="ChEBI" id="CHEBI:57394"/>
        <dbReference type="EC" id="1.14.19.1"/>
    </reaction>
    <physiologicalReaction direction="left-to-right" evidence="4 6 7">
        <dbReference type="Rhea" id="RHEA:19722"/>
    </physiologicalReaction>
</comment>
<comment type="catalytic activity">
    <reaction evidence="4 6">
        <text>hexadecanoyl-CoA + 2 Fe(II)-[cytochrome b5] + O2 + 2 H(+) = (9Z)-hexadecenoyl-CoA + 2 Fe(III)-[cytochrome b5] + 2 H2O</text>
        <dbReference type="Rhea" id="RHEA:36931"/>
        <dbReference type="Rhea" id="RHEA-COMP:10438"/>
        <dbReference type="Rhea" id="RHEA-COMP:10439"/>
        <dbReference type="ChEBI" id="CHEBI:15377"/>
        <dbReference type="ChEBI" id="CHEBI:15378"/>
        <dbReference type="ChEBI" id="CHEBI:15379"/>
        <dbReference type="ChEBI" id="CHEBI:29033"/>
        <dbReference type="ChEBI" id="CHEBI:29034"/>
        <dbReference type="ChEBI" id="CHEBI:57379"/>
        <dbReference type="ChEBI" id="CHEBI:61540"/>
    </reaction>
    <physiologicalReaction direction="left-to-right" evidence="6 11">
        <dbReference type="Rhea" id="RHEA:36932"/>
    </physiologicalReaction>
</comment>
<comment type="catalytic activity">
    <reaction evidence="4">
        <text>heptadecanoyl-CoA + 2 Fe(II)-[cytochrome b5] + O2 + 2 H(+) = (9Z)-heptadecenoyl-CoA + 2 Fe(III)-[cytochrome b5] + 2 H2O</text>
        <dbReference type="Rhea" id="RHEA:36951"/>
        <dbReference type="Rhea" id="RHEA-COMP:10438"/>
        <dbReference type="Rhea" id="RHEA-COMP:10439"/>
        <dbReference type="ChEBI" id="CHEBI:15377"/>
        <dbReference type="ChEBI" id="CHEBI:15378"/>
        <dbReference type="ChEBI" id="CHEBI:15379"/>
        <dbReference type="ChEBI" id="CHEBI:29033"/>
        <dbReference type="ChEBI" id="CHEBI:29034"/>
        <dbReference type="ChEBI" id="CHEBI:74307"/>
        <dbReference type="ChEBI" id="CHEBI:74308"/>
    </reaction>
    <physiologicalReaction direction="left-to-right" evidence="11">
        <dbReference type="Rhea" id="RHEA:36952"/>
    </physiologicalReaction>
</comment>
<comment type="catalytic activity">
    <reaction evidence="4">
        <text>(11E)-octadecenoyl-CoA + 2 Fe(II)-[cytochrome b5] + O2 + 2 H(+) = (9Z,11E)-octadecadienoyl-CoA + 2 Fe(III)-[cytochrome b5] + 2 H2O</text>
        <dbReference type="Rhea" id="RHEA:36935"/>
        <dbReference type="Rhea" id="RHEA-COMP:10438"/>
        <dbReference type="Rhea" id="RHEA-COMP:10439"/>
        <dbReference type="ChEBI" id="CHEBI:15377"/>
        <dbReference type="ChEBI" id="CHEBI:15378"/>
        <dbReference type="ChEBI" id="CHEBI:15379"/>
        <dbReference type="ChEBI" id="CHEBI:29033"/>
        <dbReference type="ChEBI" id="CHEBI:29034"/>
        <dbReference type="ChEBI" id="CHEBI:74296"/>
        <dbReference type="ChEBI" id="CHEBI:74297"/>
    </reaction>
    <physiologicalReaction direction="left-to-right" evidence="11">
        <dbReference type="Rhea" id="RHEA:36936"/>
    </physiologicalReaction>
</comment>
<comment type="pathway">
    <text evidence="12 13">Lipid metabolism; monounsaturated fatty acid biosynthesis.</text>
</comment>
<comment type="pathway">
    <text evidence="12 13">Lipid metabolism; fatty acid metabolism.</text>
</comment>
<comment type="subcellular location">
    <subcellularLocation>
        <location evidence="10">Membrane</location>
        <topology evidence="10">Multi-pass membrane protein</topology>
    </subcellularLocation>
</comment>
<comment type="tissue specificity">
    <text evidence="6">Expressed in the intestine in adult worms and in all four larval stages.</text>
</comment>
<comment type="induction">
    <text evidence="6">Expression is regulated by nhr-80 and nhr-49.</text>
</comment>
<comment type="domain">
    <text evidence="1">The histidine box domains may contain the active site and/or be involved in metal ion binding.</text>
</comment>
<comment type="disruption phenotype">
    <text evidence="5">RNAi-mediated knockdown causes a significant increase in the abundance of C18:0 fatty acid, as well as a decrease in the levels of C18:1n9 and C18:2n6 fatty acids (PubMed:15719061). Slight reduction in polyunsaturated fatty acids (PUFAs) (PubMed:15719061). Widespread vacuole formation, germ line necrosis and shortened life-span (PubMed:15719061).</text>
</comment>
<comment type="miscellaneous">
    <text evidence="7">Cytochrome b5 CYTB-5.1 is specifically required for the desaturase activity, its knockdown or mutation alters the enzyme activity.</text>
</comment>
<comment type="similarity">
    <text evidence="10">Belongs to the fatty acid desaturase type 1 family.</text>
</comment>
<feature type="chain" id="PRO_0000423389" description="Delta(9)-fatty-acid desaturase fat-7">
    <location>
        <begin position="1"/>
        <end position="338"/>
    </location>
</feature>
<feature type="transmembrane region" description="Helical" evidence="3">
    <location>
        <begin position="51"/>
        <end position="71"/>
    </location>
</feature>
<feature type="transmembrane region" description="Helical" evidence="3">
    <location>
        <begin position="76"/>
        <end position="96"/>
    </location>
</feature>
<feature type="transmembrane region" description="Helical" evidence="3">
    <location>
        <begin position="194"/>
        <end position="214"/>
    </location>
</feature>
<feature type="transmembrane region" description="Helical" evidence="3">
    <location>
        <begin position="218"/>
        <end position="238"/>
    </location>
</feature>
<organism>
    <name type="scientific">Caenorhabditis elegans</name>
    <dbReference type="NCBI Taxonomy" id="6239"/>
    <lineage>
        <taxon>Eukaryota</taxon>
        <taxon>Metazoa</taxon>
        <taxon>Ecdysozoa</taxon>
        <taxon>Nematoda</taxon>
        <taxon>Chromadorea</taxon>
        <taxon>Rhabditida</taxon>
        <taxon>Rhabditina</taxon>
        <taxon>Rhabditomorpha</taxon>
        <taxon>Rhabditoidea</taxon>
        <taxon>Rhabditidae</taxon>
        <taxon>Peloderinae</taxon>
        <taxon>Caenorhabditis</taxon>
    </lineage>
</organism>
<keyword id="KW-0275">Fatty acid biosynthesis</keyword>
<keyword id="KW-0276">Fatty acid metabolism</keyword>
<keyword id="KW-0444">Lipid biosynthesis</keyword>
<keyword id="KW-0443">Lipid metabolism</keyword>
<keyword id="KW-0472">Membrane</keyword>
<keyword id="KW-0560">Oxidoreductase</keyword>
<keyword id="KW-1185">Reference proteome</keyword>
<keyword id="KW-0812">Transmembrane</keyword>
<keyword id="KW-1133">Transmembrane helix</keyword>
<proteinExistence type="evidence at protein level"/>
<gene>
    <name type="primary">fat-7</name>
    <name type="ORF">F10D2.9</name>
</gene>
<sequence length="338" mass="39062">MTVKTRASIAKKIEKDGLDSQYLFMDPNEVLQVQEESKKIPYKMEIVWRNVALFAALHVAAAIGLYELVFHAKWQTAVFSFALYVFSGFGITAGAHRLWSHKSYKATTPMRIFLMLLNNIALQNDIIEWARDHRCHHKWTDTDADPHNTTRGFFFTHMGWLLVRKHPQVKEHGGKLDLSDLFSDPVLVFQRKHYFPLVILFCFILPTIIPVYFWKETAFIAFYVAGTFRYCFTLHATWCINSAAHYFGWKPYDTSVSAVENVFTTVVAVGEGGHNFHHTFPQDYRASEYSLIYNWTRVLIDTAAVLGLVYDRKTIADEFISRQVANHGSEESRKKSIM</sequence>
<accession>G5EGH6</accession>
<evidence type="ECO:0000250" key="1"/>
<evidence type="ECO:0000250" key="2">
    <source>
        <dbReference type="UniProtKB" id="G5EGA5"/>
    </source>
</evidence>
<evidence type="ECO:0000255" key="3"/>
<evidence type="ECO:0000269" key="4">
    <source>
    </source>
</evidence>
<evidence type="ECO:0000269" key="5">
    <source>
    </source>
</evidence>
<evidence type="ECO:0000269" key="6">
    <source>
    </source>
</evidence>
<evidence type="ECO:0000269" key="7">
    <source>
    </source>
</evidence>
<evidence type="ECO:0000303" key="8">
    <source>
    </source>
</evidence>
<evidence type="ECO:0000303" key="9">
    <source>
    </source>
</evidence>
<evidence type="ECO:0000305" key="10"/>
<evidence type="ECO:0000305" key="11">
    <source>
    </source>
</evidence>
<evidence type="ECO:0000305" key="12">
    <source>
    </source>
</evidence>
<evidence type="ECO:0000305" key="13">
    <source>
    </source>
</evidence>
<reference key="1">
    <citation type="journal article" date="2006" name="PLoS Genet.">
        <title>Genetic regulation of unsaturated fatty acid composition in C. elegans.</title>
        <authorList>
            <person name="Brock T.J."/>
            <person name="Browse J."/>
            <person name="Watts J.L."/>
        </authorList>
    </citation>
    <scope>NUCLEOTIDE SEQUENCE [MRNA]</scope>
    <scope>FUNCTION</scope>
    <scope>CATALYTIC ACTIVITY</scope>
    <scope>PATHWAY</scope>
    <scope>TISSUE SPECIFICITY</scope>
    <scope>INDUCTION</scope>
</reference>
<reference key="2">
    <citation type="journal article" date="1998" name="Science">
        <title>Genome sequence of the nematode C. elegans: a platform for investigating biology.</title>
        <authorList>
            <consortium name="The C. elegans sequencing consortium"/>
        </authorList>
    </citation>
    <scope>NUCLEOTIDE SEQUENCE [LARGE SCALE GENOMIC DNA]</scope>
    <source>
        <strain>Bristol N2</strain>
    </source>
</reference>
<reference key="3">
    <citation type="journal article" date="2000" name="Biochem. Biophys. Res. Commun.">
        <title>A palmitoyl-CoA-specific delta9 fatty acid desaturase from Caenorhabditis elegans.</title>
        <authorList>
            <person name="Watts J.L."/>
            <person name="Browse J."/>
        </authorList>
    </citation>
    <scope>FUNCTION</scope>
    <scope>CATALYTIC ACTIVITY</scope>
</reference>
<reference key="4">
    <citation type="journal article" date="2005" name="PLoS Biol.">
        <title>Nuclear hormone receptor NHR-49 controls fat consumption and fatty acid composition in C. elegans.</title>
        <authorList>
            <person name="Van Gilst M.R."/>
            <person name="Hadjivassiliou H."/>
            <person name="Jolly A."/>
            <person name="Yamamoto K.R."/>
        </authorList>
    </citation>
    <scope>FUNCTION</scope>
    <scope>DISRUPTION PHENOTYPE</scope>
</reference>
<reference key="5">
    <citation type="journal article" date="2018" name="Biochim. Biophys. Acta">
        <title>Identification of cytochrome b5 CYTB-5.1 and CYTB-5.2 in C. elegans; evidence for differential regulation of SCD.</title>
        <authorList>
            <person name="He B."/>
            <person name="Zhang J."/>
            <person name="Wang Y."/>
            <person name="Li Y."/>
            <person name="Zou X."/>
            <person name="Liang B."/>
        </authorList>
    </citation>
    <scope>FUNCTION</scope>
    <scope>CATALYTIC ACTIVITY</scope>
    <scope>PATHWAY</scope>
</reference>
<protein>
    <recommendedName>
        <fullName evidence="8 9">Delta(9)-fatty-acid desaturase fat-7</fullName>
        <shortName evidence="8 9">FAT-7</shortName>
        <ecNumber evidence="4 6">1.14.19.-</ecNumber>
        <ecNumber evidence="4 6 7">1.14.19.1</ecNumber>
    </recommendedName>
    <alternativeName>
        <fullName>Fatty-acid desaturase 7</fullName>
    </alternativeName>
    <alternativeName>
        <fullName>Stearoyl-CoA desaturase fat-7</fullName>
    </alternativeName>
</protein>
<name>FAT7_CAEEL</name>